<accession>Q28GD1</accession>
<protein>
    <recommendedName>
        <fullName evidence="3">Large ribosomal subunit protein mL51</fullName>
    </recommendedName>
    <alternativeName>
        <fullName>39S ribosomal protein L51, mitochondrial</fullName>
        <shortName>L51mt</shortName>
        <shortName>MRP-L51</shortName>
    </alternativeName>
</protein>
<organism>
    <name type="scientific">Xenopus tropicalis</name>
    <name type="common">Western clawed frog</name>
    <name type="synonym">Silurana tropicalis</name>
    <dbReference type="NCBI Taxonomy" id="8364"/>
    <lineage>
        <taxon>Eukaryota</taxon>
        <taxon>Metazoa</taxon>
        <taxon>Chordata</taxon>
        <taxon>Craniata</taxon>
        <taxon>Vertebrata</taxon>
        <taxon>Euteleostomi</taxon>
        <taxon>Amphibia</taxon>
        <taxon>Batrachia</taxon>
        <taxon>Anura</taxon>
        <taxon>Pipoidea</taxon>
        <taxon>Pipidae</taxon>
        <taxon>Xenopodinae</taxon>
        <taxon>Xenopus</taxon>
        <taxon>Silurana</taxon>
    </lineage>
</organism>
<keyword id="KW-0496">Mitochondrion</keyword>
<keyword id="KW-1185">Reference proteome</keyword>
<keyword id="KW-0687">Ribonucleoprotein</keyword>
<keyword id="KW-0689">Ribosomal protein</keyword>
<keyword id="KW-0809">Transit peptide</keyword>
<gene>
    <name type="primary">mrpl51</name>
    <name type="ORF">TEgg133l14.1</name>
</gene>
<evidence type="ECO:0000250" key="1">
    <source>
        <dbReference type="UniProtKB" id="Q4U2R6"/>
    </source>
</evidence>
<evidence type="ECO:0000255" key="2"/>
<evidence type="ECO:0000305" key="3"/>
<name>RM51_XENTR</name>
<comment type="subunit">
    <text evidence="1">Component of the mitochondrial ribosome large subunit (39S) which comprises a 16S rRNA and about 50 distinct proteins (By similarity).</text>
</comment>
<comment type="subcellular location">
    <subcellularLocation>
        <location evidence="1">Mitochondrion</location>
    </subcellularLocation>
</comment>
<comment type="similarity">
    <text evidence="3">Belongs to the mitochondrion-specific ribosomal protein mL51 family.</text>
</comment>
<reference key="1">
    <citation type="submission" date="2006-10" db="EMBL/GenBank/DDBJ databases">
        <authorList>
            <consortium name="Sanger Xenopus tropicalis EST/cDNA project"/>
        </authorList>
    </citation>
    <scope>NUCLEOTIDE SEQUENCE [LARGE SCALE MRNA]</scope>
    <source>
        <tissue>Egg</tissue>
    </source>
</reference>
<sequence>MWSVQQLLWGCRSLLTQGCRSFSLGSRDLRKMNFMPQPKNTDRWDHKRALYGVYDNIGILGDFKAHPRDLIIGPSWLRGWKGNELQRCIRKRQMVGPRMFYEDRENLNKRIRFLYKRFNRYGKHR</sequence>
<proteinExistence type="evidence at transcript level"/>
<dbReference type="EMBL" id="CR761437">
    <property type="protein sequence ID" value="CAJ82270.1"/>
    <property type="molecule type" value="mRNA"/>
</dbReference>
<dbReference type="RefSeq" id="NP_001017085.1">
    <property type="nucleotide sequence ID" value="NM_001017085.2"/>
</dbReference>
<dbReference type="RefSeq" id="XP_012814533.1">
    <property type="nucleotide sequence ID" value="XM_012959079.3"/>
</dbReference>
<dbReference type="SMR" id="Q28GD1"/>
<dbReference type="FunCoup" id="Q28GD1">
    <property type="interactions" value="861"/>
</dbReference>
<dbReference type="STRING" id="8364.ENSXETP00000054386"/>
<dbReference type="PaxDb" id="8364-ENSXETP00000048921"/>
<dbReference type="GeneID" id="549839"/>
<dbReference type="KEGG" id="xtr:549839"/>
<dbReference type="AGR" id="Xenbase:XB-GENE-5936450"/>
<dbReference type="CTD" id="51258"/>
<dbReference type="Xenbase" id="XB-GENE-5936450">
    <property type="gene designation" value="mrpl51"/>
</dbReference>
<dbReference type="eggNOG" id="KOG4045">
    <property type="taxonomic scope" value="Eukaryota"/>
</dbReference>
<dbReference type="HOGENOM" id="CLU_150741_0_0_1"/>
<dbReference type="InParanoid" id="Q28GD1"/>
<dbReference type="OMA" id="LIIAPCW"/>
<dbReference type="OrthoDB" id="10059330at2759"/>
<dbReference type="PhylomeDB" id="Q28GD1"/>
<dbReference type="TreeFam" id="TF106130"/>
<dbReference type="Proteomes" id="UP000008143">
    <property type="component" value="Chromosome 7"/>
</dbReference>
<dbReference type="Bgee" id="ENSXETG00000022612">
    <property type="expression patterns" value="Expressed in 2-cell stage embryo and 12 other cell types or tissues"/>
</dbReference>
<dbReference type="GO" id="GO:0005762">
    <property type="term" value="C:mitochondrial large ribosomal subunit"/>
    <property type="evidence" value="ECO:0000250"/>
    <property type="project" value="UniProtKB"/>
</dbReference>
<dbReference type="GO" id="GO:0003735">
    <property type="term" value="F:structural constituent of ribosome"/>
    <property type="evidence" value="ECO:0000250"/>
    <property type="project" value="UniProtKB"/>
</dbReference>
<dbReference type="GO" id="GO:0006412">
    <property type="term" value="P:translation"/>
    <property type="evidence" value="ECO:0000250"/>
    <property type="project" value="UniProtKB"/>
</dbReference>
<dbReference type="InterPro" id="IPR019373">
    <property type="entry name" value="Ribosomal_mL51"/>
</dbReference>
<dbReference type="PANTHER" id="PTHR13409:SF0">
    <property type="entry name" value="LARGE RIBOSOMAL SUBUNIT PROTEIN ML51"/>
    <property type="match status" value="1"/>
</dbReference>
<dbReference type="PANTHER" id="PTHR13409">
    <property type="entry name" value="MITOCHONDRIAL 39S RIBOSOMAL PROTEIN L51"/>
    <property type="match status" value="1"/>
</dbReference>
<dbReference type="Pfam" id="PF10244">
    <property type="entry name" value="MRP-L51"/>
    <property type="match status" value="1"/>
</dbReference>
<feature type="transit peptide" description="Mitochondrion" evidence="2">
    <location>
        <begin position="1"/>
        <end position="29"/>
    </location>
</feature>
<feature type="chain" id="PRO_0000273087" description="Large ribosomal subunit protein mL51">
    <location>
        <begin position="30"/>
        <end position="125"/>
    </location>
</feature>